<evidence type="ECO:0000255" key="1">
    <source>
        <dbReference type="HAMAP-Rule" id="MF_00417"/>
    </source>
</evidence>
<accession>A9R3Y5</accession>
<protein>
    <recommendedName>
        <fullName evidence="1">Pyrrolidone-carboxylate peptidase</fullName>
        <ecNumber evidence="1">3.4.19.3</ecNumber>
    </recommendedName>
    <alternativeName>
        <fullName evidence="1">5-oxoprolyl-peptidase</fullName>
    </alternativeName>
    <alternativeName>
        <fullName evidence="1">Pyroglutamyl-peptidase I</fullName>
        <shortName evidence="1">PGP-I</shortName>
        <shortName evidence="1">Pyrase</shortName>
    </alternativeName>
</protein>
<comment type="function">
    <text evidence="1">Removes 5-oxoproline from various penultimate amino acid residues except L-proline.</text>
</comment>
<comment type="catalytic activity">
    <reaction evidence="1">
        <text>Release of an N-terminal pyroglutamyl group from a polypeptide, the second amino acid generally not being Pro.</text>
        <dbReference type="EC" id="3.4.19.3"/>
    </reaction>
</comment>
<comment type="subunit">
    <text evidence="1">Homotetramer.</text>
</comment>
<comment type="subcellular location">
    <subcellularLocation>
        <location evidence="1">Cytoplasm</location>
    </subcellularLocation>
</comment>
<comment type="similarity">
    <text evidence="1">Belongs to the peptidase C15 family.</text>
</comment>
<name>PCP_YERPG</name>
<reference key="1">
    <citation type="journal article" date="2010" name="J. Bacteriol.">
        <title>Genome sequence of the deep-rooted Yersinia pestis strain Angola reveals new insights into the evolution and pangenome of the plague bacterium.</title>
        <authorList>
            <person name="Eppinger M."/>
            <person name="Worsham P.L."/>
            <person name="Nikolich M.P."/>
            <person name="Riley D.R."/>
            <person name="Sebastian Y."/>
            <person name="Mou S."/>
            <person name="Achtman M."/>
            <person name="Lindler L.E."/>
            <person name="Ravel J."/>
        </authorList>
    </citation>
    <scope>NUCLEOTIDE SEQUENCE [LARGE SCALE GENOMIC DNA]</scope>
    <source>
        <strain>Angola</strain>
    </source>
</reference>
<dbReference type="EC" id="3.4.19.3" evidence="1"/>
<dbReference type="EMBL" id="CP000901">
    <property type="protein sequence ID" value="ABX87326.1"/>
    <property type="molecule type" value="Genomic_DNA"/>
</dbReference>
<dbReference type="RefSeq" id="WP_002209662.1">
    <property type="nucleotide sequence ID" value="NZ_CP009935.1"/>
</dbReference>
<dbReference type="SMR" id="A9R3Y5"/>
<dbReference type="MEROPS" id="C15.001"/>
<dbReference type="GeneID" id="57975988"/>
<dbReference type="KEGG" id="ypg:YpAngola_A3594"/>
<dbReference type="PATRIC" id="fig|349746.12.peg.293"/>
<dbReference type="GO" id="GO:0005829">
    <property type="term" value="C:cytosol"/>
    <property type="evidence" value="ECO:0007669"/>
    <property type="project" value="InterPro"/>
</dbReference>
<dbReference type="GO" id="GO:0016920">
    <property type="term" value="F:pyroglutamyl-peptidase activity"/>
    <property type="evidence" value="ECO:0007669"/>
    <property type="project" value="UniProtKB-UniRule"/>
</dbReference>
<dbReference type="GO" id="GO:0006508">
    <property type="term" value="P:proteolysis"/>
    <property type="evidence" value="ECO:0007669"/>
    <property type="project" value="UniProtKB-KW"/>
</dbReference>
<dbReference type="CDD" id="cd00501">
    <property type="entry name" value="Peptidase_C15"/>
    <property type="match status" value="1"/>
</dbReference>
<dbReference type="FunFam" id="3.40.630.20:FF:000001">
    <property type="entry name" value="Pyrrolidone-carboxylate peptidase"/>
    <property type="match status" value="1"/>
</dbReference>
<dbReference type="Gene3D" id="3.40.630.20">
    <property type="entry name" value="Peptidase C15, pyroglutamyl peptidase I-like"/>
    <property type="match status" value="1"/>
</dbReference>
<dbReference type="HAMAP" id="MF_00417">
    <property type="entry name" value="Pyrrolid_peptidase"/>
    <property type="match status" value="1"/>
</dbReference>
<dbReference type="InterPro" id="IPR000816">
    <property type="entry name" value="Peptidase_C15"/>
</dbReference>
<dbReference type="InterPro" id="IPR016125">
    <property type="entry name" value="Peptidase_C15-like"/>
</dbReference>
<dbReference type="InterPro" id="IPR036440">
    <property type="entry name" value="Peptidase_C15-like_sf"/>
</dbReference>
<dbReference type="InterPro" id="IPR029762">
    <property type="entry name" value="PGP-I_bact-type"/>
</dbReference>
<dbReference type="InterPro" id="IPR033694">
    <property type="entry name" value="PGPEP1_Cys_AS"/>
</dbReference>
<dbReference type="InterPro" id="IPR033693">
    <property type="entry name" value="PGPEP1_Glu_AS"/>
</dbReference>
<dbReference type="NCBIfam" id="NF009676">
    <property type="entry name" value="PRK13197.1"/>
    <property type="match status" value="1"/>
</dbReference>
<dbReference type="NCBIfam" id="TIGR00504">
    <property type="entry name" value="pyro_pdase"/>
    <property type="match status" value="1"/>
</dbReference>
<dbReference type="PANTHER" id="PTHR23402">
    <property type="entry name" value="PROTEASE FAMILY C15 PYROGLUTAMYL-PEPTIDASE I-RELATED"/>
    <property type="match status" value="1"/>
</dbReference>
<dbReference type="PANTHER" id="PTHR23402:SF1">
    <property type="entry name" value="PYROGLUTAMYL-PEPTIDASE I"/>
    <property type="match status" value="1"/>
</dbReference>
<dbReference type="Pfam" id="PF01470">
    <property type="entry name" value="Peptidase_C15"/>
    <property type="match status" value="1"/>
</dbReference>
<dbReference type="PIRSF" id="PIRSF015592">
    <property type="entry name" value="Prld-crbxl_pptds"/>
    <property type="match status" value="1"/>
</dbReference>
<dbReference type="PRINTS" id="PR00706">
    <property type="entry name" value="PYROGLUPTASE"/>
</dbReference>
<dbReference type="SUPFAM" id="SSF53182">
    <property type="entry name" value="Pyrrolidone carboxyl peptidase (pyroglutamate aminopeptidase)"/>
    <property type="match status" value="1"/>
</dbReference>
<dbReference type="PROSITE" id="PS01334">
    <property type="entry name" value="PYRASE_CYS"/>
    <property type="match status" value="1"/>
</dbReference>
<dbReference type="PROSITE" id="PS01333">
    <property type="entry name" value="PYRASE_GLU"/>
    <property type="match status" value="1"/>
</dbReference>
<gene>
    <name evidence="1" type="primary">pcp</name>
    <name type="ordered locus">YpAngola_A3594</name>
</gene>
<sequence>MRRVLITGFEPFGGERINPSWEVVKQMNDLMMGGVRIVARQLPCAFGEALTALNTAIDDVQPVLVLAIGQAGGRADITIERVAINVDDARIPDNLGNQPVDQPIIQEGPAAYFTRLPIKAMVQGIREAGIPASVSQTAGTYVCNHVMYGLLHRLNQFNNEVKGGFIHIPYLPEQAVDHPGAPSMSAQSVLVALELAISIALQIEHDLHITGGAVH</sequence>
<proteinExistence type="inferred from homology"/>
<organism>
    <name type="scientific">Yersinia pestis bv. Antiqua (strain Angola)</name>
    <dbReference type="NCBI Taxonomy" id="349746"/>
    <lineage>
        <taxon>Bacteria</taxon>
        <taxon>Pseudomonadati</taxon>
        <taxon>Pseudomonadota</taxon>
        <taxon>Gammaproteobacteria</taxon>
        <taxon>Enterobacterales</taxon>
        <taxon>Yersiniaceae</taxon>
        <taxon>Yersinia</taxon>
    </lineage>
</organism>
<feature type="chain" id="PRO_1000124010" description="Pyrrolidone-carboxylate peptidase">
    <location>
        <begin position="1"/>
        <end position="215"/>
    </location>
</feature>
<feature type="active site" evidence="1">
    <location>
        <position position="80"/>
    </location>
</feature>
<feature type="active site" evidence="1">
    <location>
        <position position="143"/>
    </location>
</feature>
<feature type="active site" evidence="1">
    <location>
        <position position="167"/>
    </location>
</feature>
<keyword id="KW-0963">Cytoplasm</keyword>
<keyword id="KW-0378">Hydrolase</keyword>
<keyword id="KW-0645">Protease</keyword>
<keyword id="KW-0788">Thiol protease</keyword>